<accession>A1RK91</accession>
<proteinExistence type="inferred from homology"/>
<sequence length="85" mass="9862">MSLLDYFKSKKKPSTAVMAKERLQIIVAHQRGQRDTPDYFPQMKQEIIAVIRKYVQISDDQVSVQLDQNDDNLSVLELNVTLPDR</sequence>
<name>MINE_SHESW</name>
<gene>
    <name evidence="1" type="primary">minE</name>
    <name type="ordered locus">Sputw3181_2262</name>
</gene>
<organism>
    <name type="scientific">Shewanella sp. (strain W3-18-1)</name>
    <dbReference type="NCBI Taxonomy" id="351745"/>
    <lineage>
        <taxon>Bacteria</taxon>
        <taxon>Pseudomonadati</taxon>
        <taxon>Pseudomonadota</taxon>
        <taxon>Gammaproteobacteria</taxon>
        <taxon>Alteromonadales</taxon>
        <taxon>Shewanellaceae</taxon>
        <taxon>Shewanella</taxon>
    </lineage>
</organism>
<reference key="1">
    <citation type="submission" date="2006-12" db="EMBL/GenBank/DDBJ databases">
        <title>Complete sequence of Shewanella sp. W3-18-1.</title>
        <authorList>
            <consortium name="US DOE Joint Genome Institute"/>
            <person name="Copeland A."/>
            <person name="Lucas S."/>
            <person name="Lapidus A."/>
            <person name="Barry K."/>
            <person name="Detter J.C."/>
            <person name="Glavina del Rio T."/>
            <person name="Hammon N."/>
            <person name="Israni S."/>
            <person name="Dalin E."/>
            <person name="Tice H."/>
            <person name="Pitluck S."/>
            <person name="Chain P."/>
            <person name="Malfatti S."/>
            <person name="Shin M."/>
            <person name="Vergez L."/>
            <person name="Schmutz J."/>
            <person name="Larimer F."/>
            <person name="Land M."/>
            <person name="Hauser L."/>
            <person name="Kyrpides N."/>
            <person name="Lykidis A."/>
            <person name="Tiedje J."/>
            <person name="Richardson P."/>
        </authorList>
    </citation>
    <scope>NUCLEOTIDE SEQUENCE [LARGE SCALE GENOMIC DNA]</scope>
    <source>
        <strain>W3-18-1</strain>
    </source>
</reference>
<comment type="function">
    <text evidence="1">Prevents the cell division inhibition by proteins MinC and MinD at internal division sites while permitting inhibition at polar sites. This ensures cell division at the proper site by restricting the formation of a division septum at the midpoint of the long axis of the cell.</text>
</comment>
<comment type="similarity">
    <text evidence="1">Belongs to the MinE family.</text>
</comment>
<keyword id="KW-0131">Cell cycle</keyword>
<keyword id="KW-0132">Cell division</keyword>
<evidence type="ECO:0000255" key="1">
    <source>
        <dbReference type="HAMAP-Rule" id="MF_00262"/>
    </source>
</evidence>
<feature type="chain" id="PRO_0000298188" description="Cell division topological specificity factor">
    <location>
        <begin position="1"/>
        <end position="85"/>
    </location>
</feature>
<dbReference type="EMBL" id="CP000503">
    <property type="protein sequence ID" value="ABM25086.1"/>
    <property type="molecule type" value="Genomic_DNA"/>
</dbReference>
<dbReference type="RefSeq" id="WP_007648439.1">
    <property type="nucleotide sequence ID" value="NC_008750.1"/>
</dbReference>
<dbReference type="SMR" id="A1RK91"/>
<dbReference type="GeneID" id="75188944"/>
<dbReference type="KEGG" id="shw:Sputw3181_2262"/>
<dbReference type="HOGENOM" id="CLU_137929_2_2_6"/>
<dbReference type="Proteomes" id="UP000002597">
    <property type="component" value="Chromosome"/>
</dbReference>
<dbReference type="GO" id="GO:0051301">
    <property type="term" value="P:cell division"/>
    <property type="evidence" value="ECO:0007669"/>
    <property type="project" value="UniProtKB-KW"/>
</dbReference>
<dbReference type="GO" id="GO:0032955">
    <property type="term" value="P:regulation of division septum assembly"/>
    <property type="evidence" value="ECO:0007669"/>
    <property type="project" value="InterPro"/>
</dbReference>
<dbReference type="FunFam" id="3.30.1070.10:FF:000001">
    <property type="entry name" value="Cell division topological specificity factor"/>
    <property type="match status" value="1"/>
</dbReference>
<dbReference type="Gene3D" id="3.30.1070.10">
    <property type="entry name" value="Cell division topological specificity factor MinE"/>
    <property type="match status" value="1"/>
</dbReference>
<dbReference type="HAMAP" id="MF_00262">
    <property type="entry name" value="MinE"/>
    <property type="match status" value="1"/>
</dbReference>
<dbReference type="InterPro" id="IPR005527">
    <property type="entry name" value="MinE"/>
</dbReference>
<dbReference type="InterPro" id="IPR036707">
    <property type="entry name" value="MinE_sf"/>
</dbReference>
<dbReference type="NCBIfam" id="TIGR01215">
    <property type="entry name" value="minE"/>
    <property type="match status" value="1"/>
</dbReference>
<dbReference type="NCBIfam" id="NF001422">
    <property type="entry name" value="PRK00296.1"/>
    <property type="match status" value="1"/>
</dbReference>
<dbReference type="Pfam" id="PF03776">
    <property type="entry name" value="MinE"/>
    <property type="match status" value="1"/>
</dbReference>
<dbReference type="SUPFAM" id="SSF55229">
    <property type="entry name" value="Cell division protein MinE topological specificity domain"/>
    <property type="match status" value="1"/>
</dbReference>
<protein>
    <recommendedName>
        <fullName evidence="1">Cell division topological specificity factor</fullName>
    </recommendedName>
</protein>